<protein>
    <recommendedName>
        <fullName>NEDD8-conjugating enzyme UBC12</fullName>
        <ecNumber>2.3.2.34</ecNumber>
    </recommendedName>
    <alternativeName>
        <fullName>RUB1-conjugating enzyme</fullName>
    </alternativeName>
    <alternativeName>
        <fullName>Ubiquitin carrier protein 12</fullName>
    </alternativeName>
</protein>
<name>UBC12_EREGS</name>
<gene>
    <name type="primary">UBC12</name>
    <name type="ordered locus">ADL035C</name>
</gene>
<accession>Q75AF2</accession>
<dbReference type="EC" id="2.3.2.34"/>
<dbReference type="EMBL" id="AE016817">
    <property type="protein sequence ID" value="AAS51886.1"/>
    <property type="status" value="ALT_INIT"/>
    <property type="molecule type" value="Genomic_DNA"/>
</dbReference>
<dbReference type="RefSeq" id="NP_984062.1">
    <property type="nucleotide sequence ID" value="NM_209415.1"/>
</dbReference>
<dbReference type="SMR" id="Q75AF2"/>
<dbReference type="FunCoup" id="Q75AF2">
    <property type="interactions" value="849"/>
</dbReference>
<dbReference type="STRING" id="284811.Q75AF2"/>
<dbReference type="GeneID" id="4620210"/>
<dbReference type="KEGG" id="ago:AGOS_ADL035C"/>
<dbReference type="eggNOG" id="KOG0420">
    <property type="taxonomic scope" value="Eukaryota"/>
</dbReference>
<dbReference type="InParanoid" id="Q75AF2"/>
<dbReference type="OrthoDB" id="10249039at2759"/>
<dbReference type="UniPathway" id="UPA00885"/>
<dbReference type="Proteomes" id="UP000000591">
    <property type="component" value="Chromosome IV"/>
</dbReference>
<dbReference type="GO" id="GO:0005829">
    <property type="term" value="C:cytosol"/>
    <property type="evidence" value="ECO:0000318"/>
    <property type="project" value="GO_Central"/>
</dbReference>
<dbReference type="GO" id="GO:0005634">
    <property type="term" value="C:nucleus"/>
    <property type="evidence" value="ECO:0000318"/>
    <property type="project" value="GO_Central"/>
</dbReference>
<dbReference type="GO" id="GO:0005524">
    <property type="term" value="F:ATP binding"/>
    <property type="evidence" value="ECO:0007669"/>
    <property type="project" value="UniProtKB-KW"/>
</dbReference>
<dbReference type="GO" id="GO:0061654">
    <property type="term" value="F:NEDD8 conjugating enzyme activity"/>
    <property type="evidence" value="ECO:0007669"/>
    <property type="project" value="UniProtKB-EC"/>
</dbReference>
<dbReference type="GO" id="GO:0019788">
    <property type="term" value="F:NEDD8 transferase activity"/>
    <property type="evidence" value="ECO:0000318"/>
    <property type="project" value="GO_Central"/>
</dbReference>
<dbReference type="GO" id="GO:0045116">
    <property type="term" value="P:protein neddylation"/>
    <property type="evidence" value="ECO:0000318"/>
    <property type="project" value="GO_Central"/>
</dbReference>
<dbReference type="CDD" id="cd23794">
    <property type="entry name" value="UBCc_UBE2F_UBE2M"/>
    <property type="match status" value="1"/>
</dbReference>
<dbReference type="FunFam" id="3.10.110.10:FF:000005">
    <property type="entry name" value="NEDD8-conjugating enzyme Ubc12"/>
    <property type="match status" value="1"/>
</dbReference>
<dbReference type="Gene3D" id="3.10.110.10">
    <property type="entry name" value="Ubiquitin Conjugating Enzyme"/>
    <property type="match status" value="1"/>
</dbReference>
<dbReference type="InterPro" id="IPR000608">
    <property type="entry name" value="UBQ-conjugat_E2_core"/>
</dbReference>
<dbReference type="InterPro" id="IPR023313">
    <property type="entry name" value="UBQ-conjugating_AS"/>
</dbReference>
<dbReference type="InterPro" id="IPR016135">
    <property type="entry name" value="UBQ-conjugating_enzyme/RWD"/>
</dbReference>
<dbReference type="PANTHER" id="PTHR24068">
    <property type="entry name" value="UBIQUITIN-CONJUGATING ENZYME E2"/>
    <property type="match status" value="1"/>
</dbReference>
<dbReference type="Pfam" id="PF00179">
    <property type="entry name" value="UQ_con"/>
    <property type="match status" value="1"/>
</dbReference>
<dbReference type="SMART" id="SM00212">
    <property type="entry name" value="UBCc"/>
    <property type="match status" value="1"/>
</dbReference>
<dbReference type="SUPFAM" id="SSF54495">
    <property type="entry name" value="UBC-like"/>
    <property type="match status" value="1"/>
</dbReference>
<dbReference type="PROSITE" id="PS00183">
    <property type="entry name" value="UBC_1"/>
    <property type="match status" value="1"/>
</dbReference>
<dbReference type="PROSITE" id="PS50127">
    <property type="entry name" value="UBC_2"/>
    <property type="match status" value="1"/>
</dbReference>
<proteinExistence type="inferred from homology"/>
<sequence>MLKLRQLQKEKQRQAAQAQAPAQGRSAASPAQLRVEKDLATLELPTTVTLDTKCLGSENKVYLRISPEEGVYRGGHFRFSVVFRDTYPIEPPTVKCLNTIYHPNIDYSGNICLNVLREDWSPVMDLQTVVLGLLFLFLEPNGSDPLNRQAADTMLRDPYRFETNVQATMMGGHLDGQVFDNVRH</sequence>
<feature type="chain" id="PRO_0000082496" description="NEDD8-conjugating enzyme UBC12">
    <location>
        <begin position="1"/>
        <end position="184"/>
    </location>
</feature>
<feature type="domain" description="UBC core" evidence="2">
    <location>
        <begin position="30"/>
        <end position="174"/>
    </location>
</feature>
<feature type="region of interest" description="Disordered" evidence="4">
    <location>
        <begin position="10"/>
        <end position="29"/>
    </location>
</feature>
<feature type="compositionally biased region" description="Low complexity" evidence="4">
    <location>
        <begin position="14"/>
        <end position="29"/>
    </location>
</feature>
<feature type="active site" description="Glycyl thioester intermediate" evidence="2 3">
    <location>
        <position position="112"/>
    </location>
</feature>
<comment type="function">
    <text evidence="1">Accepts the ubiquitin-like protein NEDD8/RUB1 from the UBA3-ULA1 E1 complex and catalyzes its covalent attachment to other proteins.</text>
</comment>
<comment type="catalytic activity">
    <reaction>
        <text>[E1 NEDD8-activating enzyme]-S-[NEDD8 protein]-yl-L-cysteine + [E2 NEDD8-conjugating enzyme]-L-cysteine = [E1 NEDD8-activating enzyme]-L-cysteine + [E2 NEDD8-conjugating enzyme]-S-[NEDD8-protein]-yl-L-cysteine.</text>
        <dbReference type="EC" id="2.3.2.34"/>
    </reaction>
</comment>
<comment type="pathway">
    <text>Protein modification; protein neddylation.</text>
</comment>
<comment type="similarity">
    <text evidence="2">Belongs to the ubiquitin-conjugating enzyme family. UBC12 subfamily.</text>
</comment>
<comment type="sequence caution" evidence="5">
    <conflict type="erroneous initiation">
        <sequence resource="EMBL-CDS" id="AAS51886"/>
    </conflict>
</comment>
<reference key="1">
    <citation type="journal article" date="2004" name="Science">
        <title>The Ashbya gossypii genome as a tool for mapping the ancient Saccharomyces cerevisiae genome.</title>
        <authorList>
            <person name="Dietrich F.S."/>
            <person name="Voegeli S."/>
            <person name="Brachat S."/>
            <person name="Lerch A."/>
            <person name="Gates K."/>
            <person name="Steiner S."/>
            <person name="Mohr C."/>
            <person name="Poehlmann R."/>
            <person name="Luedi P."/>
            <person name="Choi S."/>
            <person name="Wing R.A."/>
            <person name="Flavier A."/>
            <person name="Gaffney T.D."/>
            <person name="Philippsen P."/>
        </authorList>
    </citation>
    <scope>NUCLEOTIDE SEQUENCE [LARGE SCALE GENOMIC DNA]</scope>
    <source>
        <strain>ATCC 10895 / CBS 109.51 / FGSC 9923 / NRRL Y-1056</strain>
    </source>
</reference>
<reference key="2">
    <citation type="journal article" date="2013" name="G3 (Bethesda)">
        <title>Genomes of Ashbya fungi isolated from insects reveal four mating-type loci, numerous translocations, lack of transposons, and distinct gene duplications.</title>
        <authorList>
            <person name="Dietrich F.S."/>
            <person name="Voegeli S."/>
            <person name="Kuo S."/>
            <person name="Philippsen P."/>
        </authorList>
    </citation>
    <scope>GENOME REANNOTATION</scope>
    <source>
        <strain>ATCC 10895 / CBS 109.51 / FGSC 9923 / NRRL Y-1056</strain>
    </source>
</reference>
<organism>
    <name type="scientific">Eremothecium gossypii (strain ATCC 10895 / CBS 109.51 / FGSC 9923 / NRRL Y-1056)</name>
    <name type="common">Yeast</name>
    <name type="synonym">Ashbya gossypii</name>
    <dbReference type="NCBI Taxonomy" id="284811"/>
    <lineage>
        <taxon>Eukaryota</taxon>
        <taxon>Fungi</taxon>
        <taxon>Dikarya</taxon>
        <taxon>Ascomycota</taxon>
        <taxon>Saccharomycotina</taxon>
        <taxon>Saccharomycetes</taxon>
        <taxon>Saccharomycetales</taxon>
        <taxon>Saccharomycetaceae</taxon>
        <taxon>Eremothecium</taxon>
    </lineage>
</organism>
<evidence type="ECO:0000250" key="1"/>
<evidence type="ECO:0000255" key="2">
    <source>
        <dbReference type="PROSITE-ProRule" id="PRU00388"/>
    </source>
</evidence>
<evidence type="ECO:0000255" key="3">
    <source>
        <dbReference type="PROSITE-ProRule" id="PRU10133"/>
    </source>
</evidence>
<evidence type="ECO:0000256" key="4">
    <source>
        <dbReference type="SAM" id="MobiDB-lite"/>
    </source>
</evidence>
<evidence type="ECO:0000305" key="5"/>
<keyword id="KW-0067">ATP-binding</keyword>
<keyword id="KW-0547">Nucleotide-binding</keyword>
<keyword id="KW-1185">Reference proteome</keyword>
<keyword id="KW-0808">Transferase</keyword>
<keyword id="KW-0833">Ubl conjugation pathway</keyword>